<keyword id="KW-1015">Disulfide bond</keyword>
<keyword id="KW-0872">Ion channel impairing toxin</keyword>
<keyword id="KW-0528">Neurotoxin</keyword>
<keyword id="KW-0632">Potassium channel impairing toxin</keyword>
<keyword id="KW-0964">Secreted</keyword>
<keyword id="KW-0732">Signal</keyword>
<keyword id="KW-0800">Toxin</keyword>
<keyword id="KW-1220">Voltage-gated potassium channel impairing toxin</keyword>
<organism>
    <name type="scientific">Iotyrris olangoensis</name>
    <name type="common">Sea snail</name>
    <name type="synonym">Lophiotoma olangoensis</name>
    <dbReference type="NCBI Taxonomy" id="2420066"/>
    <lineage>
        <taxon>Eukaryota</taxon>
        <taxon>Metazoa</taxon>
        <taxon>Spiralia</taxon>
        <taxon>Lophotrochozoa</taxon>
        <taxon>Mollusca</taxon>
        <taxon>Gastropoda</taxon>
        <taxon>Caenogastropoda</taxon>
        <taxon>Neogastropoda</taxon>
        <taxon>Conoidea</taxon>
        <taxon>Turridae</taxon>
        <taxon>Iotyrris</taxon>
    </lineage>
</organism>
<evidence type="ECO:0000250" key="1"/>
<evidence type="ECO:0000255" key="2"/>
<evidence type="ECO:0000305" key="3"/>
<proteinExistence type="evidence at transcript level"/>
<feature type="signal peptide" evidence="2">
    <location>
        <begin position="1"/>
        <end position="27"/>
    </location>
</feature>
<feature type="chain" id="PRO_0000419849" description="Turripeptide Lol11.2">
    <location>
        <begin position="28"/>
        <end position="83"/>
    </location>
</feature>
<dbReference type="GO" id="GO:0005576">
    <property type="term" value="C:extracellular region"/>
    <property type="evidence" value="ECO:0007669"/>
    <property type="project" value="UniProtKB-SubCell"/>
</dbReference>
<dbReference type="GO" id="GO:0015459">
    <property type="term" value="F:potassium channel regulator activity"/>
    <property type="evidence" value="ECO:0007669"/>
    <property type="project" value="UniProtKB-KW"/>
</dbReference>
<dbReference type="GO" id="GO:0090729">
    <property type="term" value="F:toxin activity"/>
    <property type="evidence" value="ECO:0007669"/>
    <property type="project" value="UniProtKB-KW"/>
</dbReference>
<sequence>MARLMMTVGCLIFIVVLLDMMVPVSNTCPGYFGECGDGPEEGECCGMYNYCCKGRCLMLASCQKRRDAGRLLRSLKKLKLTTH</sequence>
<comment type="function">
    <text evidence="1">Acts as a neurotoxin by inhibiting voltage-gated potassium channels (Kv).</text>
</comment>
<comment type="subcellular location">
    <subcellularLocation>
        <location evidence="1">Secreted</location>
    </subcellularLocation>
</comment>
<comment type="tissue specificity">
    <text>Expressed by the venom duct.</text>
</comment>
<comment type="domain">
    <text>The cysteine framework is XI (C-C-CC-CC-C-C).</text>
</comment>
<comment type="PTM">
    <text evidence="1">Contains 4 disulfide bonds.</text>
</comment>
<comment type="similarity">
    <text evidence="3">Belongs to the conopeptide I2-like superfamily.</text>
</comment>
<protein>
    <recommendedName>
        <fullName>Turripeptide Lol11.2</fullName>
    </recommendedName>
    <alternativeName>
        <fullName>OL67</fullName>
    </alternativeName>
</protein>
<accession>P0DKN3</accession>
<name>TUB2_IOTOL</name>
<reference key="1">
    <citation type="journal article" date="2006" name="J. Mol. Evol.">
        <title>Genes expressed in a turrid venom duct: divergence and similarity to conotoxins.</title>
        <authorList>
            <person name="Watkins M."/>
            <person name="Hillyard D.R."/>
            <person name="Olivera B.M."/>
        </authorList>
    </citation>
    <scope>NUCLEOTIDE SEQUENCE [MRNA]</scope>
    <source>
        <tissue>Venom duct</tissue>
    </source>
</reference>